<gene>
    <name type="primary">Pcsk9</name>
    <name type="synonym">Narc1</name>
</gene>
<sequence length="694" mass="74823">MGTHCSAWLRWPLLPLLPPLLLLLLLLCPTGAGAQDEDGDYEELMLALPSQEDGLADEAAHVATATFRRCSKEAWRLPGTYIVVLMEETQRLQIEQTAHRLQTRAARRGYVIKVLHIFYDLFPGFLVKMSSDLLGLALKLPHVEYIEEDSFVFAQSIPWNLERIIPAWHQTEEDRSPDGSSQVEVYLLDTSIQGAHREIEGRVTITDFNSVPEEDGTRFHRQASKCDSHGTHLAGVVSGRDAGVAKGTSLHSLRVLNCQGKGTVSGTLIGLEFIRKSQLIQPSGPLVVLLPLAGGYSRILNAACRHLARTGVVLVAAAGNFRDDACLYSPASAPEVITVGATNAQDQPVTLGTLGTNFGRCVDLFAPGKDIIGASSDCSTCFMSQSGTSQAAAHVAGIVARMLSREPTLTLAELRQRLIHFSTKDVINMAWFPEDQQVLTPNLVATLPPSTHETGGQLLCRTVWSAHSGPTRTATATARCAPEEELLSCSSFSRSGRRRGDWIEAIGGQQVCKALNAFGGEGVYAVARCCLVPRANCSIHNTPAARAGLETHVHCHQKDHVLTGCSFHWEVEDLSVRRQPALRSRRQPGQCVGHQAASVYASCCHAPGLECKIKEHGISGPSEQVTVACEAGWTLTGCNVLPGASLTLGAYSVDNLCVARVHDTARADRTSGEATVAAAICCRSRPSAKASWVQ</sequence>
<proteinExistence type="evidence at protein level"/>
<organism>
    <name type="scientific">Mus musculus</name>
    <name type="common">Mouse</name>
    <dbReference type="NCBI Taxonomy" id="10090"/>
    <lineage>
        <taxon>Eukaryota</taxon>
        <taxon>Metazoa</taxon>
        <taxon>Chordata</taxon>
        <taxon>Craniata</taxon>
        <taxon>Vertebrata</taxon>
        <taxon>Euteleostomi</taxon>
        <taxon>Mammalia</taxon>
        <taxon>Eutheria</taxon>
        <taxon>Euarchontoglires</taxon>
        <taxon>Glires</taxon>
        <taxon>Rodentia</taxon>
        <taxon>Myomorpha</taxon>
        <taxon>Muroidea</taxon>
        <taxon>Muridae</taxon>
        <taxon>Murinae</taxon>
        <taxon>Mus</taxon>
        <taxon>Mus</taxon>
    </lineage>
</organism>
<evidence type="ECO:0000250" key="1"/>
<evidence type="ECO:0000250" key="2">
    <source>
        <dbReference type="UniProtKB" id="Q8NBP7"/>
    </source>
</evidence>
<evidence type="ECO:0000255" key="3"/>
<evidence type="ECO:0000255" key="4">
    <source>
        <dbReference type="PROSITE-ProRule" id="PRU01240"/>
    </source>
</evidence>
<evidence type="ECO:0000269" key="5">
    <source>
    </source>
</evidence>
<evidence type="ECO:0000269" key="6">
    <source>
    </source>
</evidence>
<evidence type="ECO:0000269" key="7">
    <source>
    </source>
</evidence>
<evidence type="ECO:0000269" key="8">
    <source>
    </source>
</evidence>
<evidence type="ECO:0000305" key="9"/>
<accession>Q80W65</accession>
<accession>B1AZI4</accession>
<accession>Q3UEH7</accession>
<accession>Q8BXW9</accession>
<accession>Q8CFT6</accession>
<comment type="function">
    <text evidence="7 8">Crucial player in the regulation of plasma cholesterol homeostasis. Binds to low-density lipid receptor family members: low density lipoprotein receptor (LDLR), very low density lipoprotein receptor (VLDLR), apolipoprotein E receptor (LRP1/APOER) and apolipoprotein receptor 2 (LRP8/APOER2), and promotes their degradation in intracellular acidic compartments. Acts via a non-proteolytic mechanism to enhance the degradation of the hepatic LDLR through a clathrin LDLRAP1/ARH-mediated pathway. May prevent the recycling of LDLR from endosomes to the cell surface or direct it to lysosomes for degradation. Can induce ubiquitination of LDLR leading to its subsequent degradation. Inhibits intracellular degradation of APOB via the autophagosome/lysosome pathway in a LDLR-independent manner. Involved in the disposal of non-acetylated intermediates of BACE1 in the early secretory pathway. Inhibits epithelial Na(+) channel (ENaC)-mediated Na(+) absorption by reducing ENaC surface expression primarily by increasing its proteasomal degradation. Regulates neuronal apoptosis via modulation of LRP8/APOER2 levels and related anti-apoptotic signaling pathways.</text>
</comment>
<comment type="cofactor">
    <cofactor evidence="9">
        <name>Ca(2+)</name>
        <dbReference type="ChEBI" id="CHEBI:29108"/>
    </cofactor>
</comment>
<comment type="activity regulation">
    <text>Its proteolytic activity is autoinhibited by the non-covalent binding of the propeptide to the catalytic domain. Inhibited by EGTA.</text>
</comment>
<comment type="subunit">
    <text evidence="2">Monomer. Can self-associate to form dimers and higher multimers which may have increased LDLR degrading activity. The precursor protein but not the mature protein may form multimers. Interacts with APOB, VLDLR, LRP8/APOER2 and BACE1. The full-length immature form (pro-PCSK9) interacts with SCNN1A, SCNN1B and SCNN1G. The pro-PCSK9 form (via C-terminal domain) interacts with LDLR. Interacts (via the C-terminal domain) with ANXA2 (via repeat Annexin 1); the interaction inhibits the degradation of LDLR.</text>
</comment>
<comment type="subcellular location">
    <subcellularLocation>
        <location evidence="1">Cytoplasm</location>
    </subcellularLocation>
    <subcellularLocation>
        <location>Secreted</location>
    </subcellularLocation>
    <subcellularLocation>
        <location evidence="1">Endosome</location>
    </subcellularLocation>
    <subcellularLocation>
        <location evidence="1">Lysosome</location>
    </subcellularLocation>
    <subcellularLocation>
        <location evidence="1">Cell surface</location>
    </subcellularLocation>
    <subcellularLocation>
        <location evidence="1">Endoplasmic reticulum</location>
    </subcellularLocation>
    <subcellularLocation>
        <location evidence="1">Golgi apparatus</location>
    </subcellularLocation>
    <text evidence="1">Autocatalytic cleavage is required to transport it from the endoplasmic reticulum to the Golgi apparatus and for the secretion of the mature protein. Localizes to the endoplasmic reticulum in the absence of LDLR and co-localizes to the cell surface and to the endosomes/lysosomes in the presence of LDLR. The sorting to the cell surface and endosomes is required in order to fully promote LDLR degradation (By similarity).</text>
</comment>
<comment type="tissue specificity">
    <text>Hepatocytes, kidney mesenchymal cells, intestinal ileum, colon epithelia and embryonic brain telencephalon neurons.</text>
</comment>
<comment type="developmental stage">
    <text>In the embryo, expressed in the liver at 9 dpc, in the skin and transiently in the telencephalon at 12 dpc, and in the kidney, small intestine and cerebellum at 15 dpc.</text>
</comment>
<comment type="induction">
    <text evidence="5">Down-regulated following a high-cholesterol diet.</text>
</comment>
<comment type="domain">
    <text evidence="1">The C-terminal domain (CRD) is essential for the LDLR-binding and degrading activities.</text>
</comment>
<comment type="domain">
    <text evidence="1">The catalytic domain is responsible for mediating its self-association.</text>
</comment>
<comment type="PTM">
    <text evidence="1">Cleavage by furin and PCSK5 generates a truncated inactive protein that is unable to induce LDLR degradation.</text>
</comment>
<comment type="PTM">
    <text evidence="1">Undergoes autocatalytic cleavage in the endoplasmic reticulum to release the propeptide from the N-terminus and the cleavage of the propeptide is strictly required for its maturation and activation. The cleaved propeptide however remains associated with the catalytic domain through non-covalent interactions, preventing potential substrates from accessing its active site. As a result, it is secreted from cells as a propeptide-containing, enzymatically inactive protein (By similarity).</text>
</comment>
<comment type="PTM">
    <text evidence="1">Phosphorylation protects the propeptide against proteolysis.</text>
</comment>
<comment type="similarity">
    <text evidence="9">Belongs to the peptidase S8 family.</text>
</comment>
<comment type="sequence caution" evidence="9">
    <conflict type="erroneous initiation">
        <sequence resource="EMBL-CDS" id="AAP31672"/>
    </conflict>
    <text>Extended N-terminus.</text>
</comment>
<comment type="sequence caution" evidence="9">
    <conflict type="erroneous initiation">
        <sequence resource="EMBL-CDS" id="BAE28934"/>
    </conflict>
    <text>Extended N-terminus.</text>
</comment>
<comment type="sequence caution" evidence="9">
    <conflict type="erroneous initiation">
        <sequence resource="EMBL-CDS" id="CAC60362"/>
    </conflict>
    <text>Extended N-terminus.</text>
</comment>
<keyword id="KW-0053">Apoptosis</keyword>
<keyword id="KW-0068">Autocatalytic cleavage</keyword>
<keyword id="KW-0106">Calcium</keyword>
<keyword id="KW-0153">Cholesterol metabolism</keyword>
<keyword id="KW-0963">Cytoplasm</keyword>
<keyword id="KW-1015">Disulfide bond</keyword>
<keyword id="KW-0256">Endoplasmic reticulum</keyword>
<keyword id="KW-0967">Endosome</keyword>
<keyword id="KW-0325">Glycoprotein</keyword>
<keyword id="KW-0333">Golgi apparatus</keyword>
<keyword id="KW-0378">Hydrolase</keyword>
<keyword id="KW-0443">Lipid metabolism</keyword>
<keyword id="KW-0458">Lysosome</keyword>
<keyword id="KW-0597">Phosphoprotein</keyword>
<keyword id="KW-0645">Protease</keyword>
<keyword id="KW-1185">Reference proteome</keyword>
<keyword id="KW-0964">Secreted</keyword>
<keyword id="KW-0720">Serine protease</keyword>
<keyword id="KW-0732">Signal</keyword>
<keyword id="KW-0753">Steroid metabolism</keyword>
<keyword id="KW-1207">Sterol metabolism</keyword>
<keyword id="KW-0765">Sulfation</keyword>
<keyword id="KW-0865">Zymogen</keyword>
<dbReference type="EC" id="3.4.21.-"/>
<dbReference type="EMBL" id="AX207688">
    <property type="protein sequence ID" value="CAC60362.1"/>
    <property type="status" value="ALT_INIT"/>
    <property type="molecule type" value="Unassigned_DNA"/>
</dbReference>
<dbReference type="EMBL" id="AY273821">
    <property type="protein sequence ID" value="AAP31672.1"/>
    <property type="status" value="ALT_INIT"/>
    <property type="molecule type" value="mRNA"/>
</dbReference>
<dbReference type="EMBL" id="AK149520">
    <property type="protein sequence ID" value="BAE28934.1"/>
    <property type="status" value="ALT_INIT"/>
    <property type="molecule type" value="mRNA"/>
</dbReference>
<dbReference type="EMBL" id="AL954352">
    <property type="status" value="NOT_ANNOTATED_CDS"/>
    <property type="molecule type" value="Genomic_DNA"/>
</dbReference>
<dbReference type="EMBL" id="BC038085">
    <property type="protein sequence ID" value="AAH38085.1"/>
    <property type="molecule type" value="mRNA"/>
</dbReference>
<dbReference type="CCDS" id="CCDS18418.1"/>
<dbReference type="RefSeq" id="NP_705793.1">
    <property type="nucleotide sequence ID" value="NM_153565.2"/>
</dbReference>
<dbReference type="SMR" id="Q80W65"/>
<dbReference type="ComplexPortal" id="CPX-129">
    <property type="entry name" value="LDLR-PCSK9 complex"/>
</dbReference>
<dbReference type="ComplexPortal" id="CPX-141">
    <property type="entry name" value="ANXA2-PCSK9 complex"/>
</dbReference>
<dbReference type="CORUM" id="Q80W65"/>
<dbReference type="FunCoup" id="Q80W65">
    <property type="interactions" value="32"/>
</dbReference>
<dbReference type="IntAct" id="Q80W65">
    <property type="interactions" value="1"/>
</dbReference>
<dbReference type="MINT" id="Q80W65"/>
<dbReference type="STRING" id="10090.ENSMUSP00000055757"/>
<dbReference type="BindingDB" id="Q80W65"/>
<dbReference type="ChEMBL" id="CHEMBL5291514"/>
<dbReference type="MEROPS" id="S08.039"/>
<dbReference type="GlyCosmos" id="Q80W65">
    <property type="glycosylation" value="1 site, No reported glycans"/>
</dbReference>
<dbReference type="GlyGen" id="Q80W65">
    <property type="glycosylation" value="1 site"/>
</dbReference>
<dbReference type="iPTMnet" id="Q80W65"/>
<dbReference type="PhosphoSitePlus" id="Q80W65"/>
<dbReference type="CPTAC" id="non-CPTAC-3369"/>
<dbReference type="jPOST" id="Q80W65"/>
<dbReference type="PaxDb" id="10090-ENSMUSP00000055757"/>
<dbReference type="PeptideAtlas" id="Q80W65"/>
<dbReference type="ProteomicsDB" id="288003"/>
<dbReference type="ABCD" id="Q80W65">
    <property type="antibodies" value="1 sequenced antibody"/>
</dbReference>
<dbReference type="Antibodypedia" id="33231">
    <property type="antibodies" value="1115 antibodies from 45 providers"/>
</dbReference>
<dbReference type="DNASU" id="100102"/>
<dbReference type="Ensembl" id="ENSMUST00000049507.6">
    <property type="protein sequence ID" value="ENSMUSP00000055757.6"/>
    <property type="gene ID" value="ENSMUSG00000044254.7"/>
</dbReference>
<dbReference type="GeneID" id="100102"/>
<dbReference type="KEGG" id="mmu:100102"/>
<dbReference type="UCSC" id="uc008tyi.2">
    <property type="organism name" value="mouse"/>
</dbReference>
<dbReference type="AGR" id="MGI:2140260"/>
<dbReference type="CTD" id="255738"/>
<dbReference type="MGI" id="MGI:2140260">
    <property type="gene designation" value="Pcsk9"/>
</dbReference>
<dbReference type="VEuPathDB" id="HostDB:ENSMUSG00000044254"/>
<dbReference type="eggNOG" id="KOG1153">
    <property type="taxonomic scope" value="Eukaryota"/>
</dbReference>
<dbReference type="GeneTree" id="ENSGT00490000043472"/>
<dbReference type="HOGENOM" id="CLU_011263_11_0_1"/>
<dbReference type="InParanoid" id="Q80W65"/>
<dbReference type="OMA" id="GEEMMGC"/>
<dbReference type="OrthoDB" id="206201at2759"/>
<dbReference type="PhylomeDB" id="Q80W65"/>
<dbReference type="TreeFam" id="TF106271"/>
<dbReference type="BRENDA" id="3.4.21.61">
    <property type="organism ID" value="3474"/>
</dbReference>
<dbReference type="Reactome" id="R-MMU-381426">
    <property type="pathway name" value="Regulation of Insulin-like Growth Factor (IGF) transport and uptake by Insulin-like Growth Factor Binding Proteins (IGFBPs)"/>
</dbReference>
<dbReference type="Reactome" id="R-MMU-8866427">
    <property type="pathway name" value="VLDLR internalisation and degradation"/>
</dbReference>
<dbReference type="Reactome" id="R-MMU-8957275">
    <property type="pathway name" value="Post-translational protein phosphorylation"/>
</dbReference>
<dbReference type="Reactome" id="R-MMU-8964038">
    <property type="pathway name" value="LDL clearance"/>
</dbReference>
<dbReference type="BioGRID-ORCS" id="100102">
    <property type="hits" value="2 hits in 82 CRISPR screens"/>
</dbReference>
<dbReference type="PRO" id="PR:Q80W65"/>
<dbReference type="Proteomes" id="UP000000589">
    <property type="component" value="Chromosome 4"/>
</dbReference>
<dbReference type="RNAct" id="Q80W65">
    <property type="molecule type" value="protein"/>
</dbReference>
<dbReference type="Bgee" id="ENSMUSG00000044254">
    <property type="expression patterns" value="Expressed in epithelium of small intestine and 129 other cell types or tissues"/>
</dbReference>
<dbReference type="GO" id="GO:0009986">
    <property type="term" value="C:cell surface"/>
    <property type="evidence" value="ECO:0000250"/>
    <property type="project" value="UniProtKB"/>
</dbReference>
<dbReference type="GO" id="GO:0030134">
    <property type="term" value="C:COPII-coated ER to Golgi transport vesicle"/>
    <property type="evidence" value="ECO:0000314"/>
    <property type="project" value="MGI"/>
</dbReference>
<dbReference type="GO" id="GO:0005737">
    <property type="term" value="C:cytoplasm"/>
    <property type="evidence" value="ECO:0000250"/>
    <property type="project" value="UniProtKB"/>
</dbReference>
<dbReference type="GO" id="GO:0005769">
    <property type="term" value="C:early endosome"/>
    <property type="evidence" value="ECO:0000250"/>
    <property type="project" value="UniProtKB"/>
</dbReference>
<dbReference type="GO" id="GO:0005783">
    <property type="term" value="C:endoplasmic reticulum"/>
    <property type="evidence" value="ECO:0000314"/>
    <property type="project" value="MGI"/>
</dbReference>
<dbReference type="GO" id="GO:0005788">
    <property type="term" value="C:endoplasmic reticulum lumen"/>
    <property type="evidence" value="ECO:0000304"/>
    <property type="project" value="Reactome"/>
</dbReference>
<dbReference type="GO" id="GO:0005576">
    <property type="term" value="C:extracellular region"/>
    <property type="evidence" value="ECO:0000314"/>
    <property type="project" value="MGI"/>
</dbReference>
<dbReference type="GO" id="GO:0005615">
    <property type="term" value="C:extracellular space"/>
    <property type="evidence" value="ECO:0000314"/>
    <property type="project" value="HGNC-UCL"/>
</dbReference>
<dbReference type="GO" id="GO:0005794">
    <property type="term" value="C:Golgi apparatus"/>
    <property type="evidence" value="ECO:0000250"/>
    <property type="project" value="UniProtKB"/>
</dbReference>
<dbReference type="GO" id="GO:0005770">
    <property type="term" value="C:late endosome"/>
    <property type="evidence" value="ECO:0000250"/>
    <property type="project" value="UniProtKB"/>
</dbReference>
<dbReference type="GO" id="GO:0005764">
    <property type="term" value="C:lysosome"/>
    <property type="evidence" value="ECO:0000250"/>
    <property type="project" value="UniProtKB"/>
</dbReference>
<dbReference type="GO" id="GO:1990667">
    <property type="term" value="C:PCSK9-AnxA2 complex"/>
    <property type="evidence" value="ECO:0000250"/>
    <property type="project" value="BHF-UCL"/>
</dbReference>
<dbReference type="GO" id="GO:1990666">
    <property type="term" value="C:PCSK9-LDLR complex"/>
    <property type="evidence" value="ECO:0000250"/>
    <property type="project" value="BHF-UCL"/>
</dbReference>
<dbReference type="GO" id="GO:0048471">
    <property type="term" value="C:perinuclear region of cytoplasm"/>
    <property type="evidence" value="ECO:0007669"/>
    <property type="project" value="Ensembl"/>
</dbReference>
<dbReference type="GO" id="GO:0005886">
    <property type="term" value="C:plasma membrane"/>
    <property type="evidence" value="ECO:0007669"/>
    <property type="project" value="Ensembl"/>
</dbReference>
<dbReference type="GO" id="GO:0034185">
    <property type="term" value="F:apolipoprotein binding"/>
    <property type="evidence" value="ECO:0000314"/>
    <property type="project" value="UniProtKB"/>
</dbReference>
<dbReference type="GO" id="GO:0034190">
    <property type="term" value="F:apolipoprotein receptor binding"/>
    <property type="evidence" value="ECO:0007669"/>
    <property type="project" value="Ensembl"/>
</dbReference>
<dbReference type="GO" id="GO:0030169">
    <property type="term" value="F:low-density lipoprotein particle binding"/>
    <property type="evidence" value="ECO:0000314"/>
    <property type="project" value="UniProtKB"/>
</dbReference>
<dbReference type="GO" id="GO:0050750">
    <property type="term" value="F:low-density lipoprotein particle receptor binding"/>
    <property type="evidence" value="ECO:0000314"/>
    <property type="project" value="HGNC-UCL"/>
</dbReference>
<dbReference type="GO" id="GO:0004252">
    <property type="term" value="F:serine-type endopeptidase activity"/>
    <property type="evidence" value="ECO:0000250"/>
    <property type="project" value="HGNC-UCL"/>
</dbReference>
<dbReference type="GO" id="GO:0030547">
    <property type="term" value="F:signaling receptor inhibitor activity"/>
    <property type="evidence" value="ECO:0007669"/>
    <property type="project" value="Ensembl"/>
</dbReference>
<dbReference type="GO" id="GO:0019871">
    <property type="term" value="F:sodium channel inhibitor activity"/>
    <property type="evidence" value="ECO:0007669"/>
    <property type="project" value="Ensembl"/>
</dbReference>
<dbReference type="GO" id="GO:0034189">
    <property type="term" value="F:very-low-density lipoprotein particle binding"/>
    <property type="evidence" value="ECO:0000314"/>
    <property type="project" value="UniProtKB"/>
</dbReference>
<dbReference type="GO" id="GO:0070326">
    <property type="term" value="F:very-low-density lipoprotein particle receptor binding"/>
    <property type="evidence" value="ECO:0007669"/>
    <property type="project" value="Ensembl"/>
</dbReference>
<dbReference type="GO" id="GO:0006915">
    <property type="term" value="P:apoptotic process"/>
    <property type="evidence" value="ECO:0007669"/>
    <property type="project" value="UniProtKB-KW"/>
</dbReference>
<dbReference type="GO" id="GO:0032869">
    <property type="term" value="P:cellular response to insulin stimulus"/>
    <property type="evidence" value="ECO:0000314"/>
    <property type="project" value="HGNC-UCL"/>
</dbReference>
<dbReference type="GO" id="GO:0009267">
    <property type="term" value="P:cellular response to starvation"/>
    <property type="evidence" value="ECO:0000314"/>
    <property type="project" value="HGNC-UCL"/>
</dbReference>
<dbReference type="GO" id="GO:0042632">
    <property type="term" value="P:cholesterol homeostasis"/>
    <property type="evidence" value="ECO:0000250"/>
    <property type="project" value="HGNC-UCL"/>
</dbReference>
<dbReference type="GO" id="GO:0008203">
    <property type="term" value="P:cholesterol metabolic process"/>
    <property type="evidence" value="ECO:0000314"/>
    <property type="project" value="MGI"/>
</dbReference>
<dbReference type="GO" id="GO:0001822">
    <property type="term" value="P:kidney development"/>
    <property type="evidence" value="ECO:0000270"/>
    <property type="project" value="HGNC-UCL"/>
</dbReference>
<dbReference type="GO" id="GO:0042157">
    <property type="term" value="P:lipoprotein metabolic process"/>
    <property type="evidence" value="ECO:0000314"/>
    <property type="project" value="MGI"/>
</dbReference>
<dbReference type="GO" id="GO:0001889">
    <property type="term" value="P:liver development"/>
    <property type="evidence" value="ECO:0000270"/>
    <property type="project" value="HGNC-UCL"/>
</dbReference>
<dbReference type="GO" id="GO:0032802">
    <property type="term" value="P:low-density lipoprotein particle receptor catabolic process"/>
    <property type="evidence" value="ECO:0000250"/>
    <property type="project" value="UniProtKB"/>
</dbReference>
<dbReference type="GO" id="GO:0032799">
    <property type="term" value="P:low-density lipoprotein receptor particle metabolic process"/>
    <property type="evidence" value="ECO:0000314"/>
    <property type="project" value="MGI"/>
</dbReference>
<dbReference type="GO" id="GO:0007041">
    <property type="term" value="P:lysosomal transport"/>
    <property type="evidence" value="ECO:0007669"/>
    <property type="project" value="Ensembl"/>
</dbReference>
<dbReference type="GO" id="GO:0010989">
    <property type="term" value="P:negative regulation of low-density lipoprotein particle clearance"/>
    <property type="evidence" value="ECO:0007669"/>
    <property type="project" value="Ensembl"/>
</dbReference>
<dbReference type="GO" id="GO:0002091">
    <property type="term" value="P:negative regulation of receptor internalization"/>
    <property type="evidence" value="ECO:0000266"/>
    <property type="project" value="ComplexPortal"/>
</dbReference>
<dbReference type="GO" id="GO:0001920">
    <property type="term" value="P:negative regulation of receptor recycling"/>
    <property type="evidence" value="ECO:0007669"/>
    <property type="project" value="Ensembl"/>
</dbReference>
<dbReference type="GO" id="GO:1905601">
    <property type="term" value="P:negative regulation of receptor-mediated endocytosis involved in cholesterol transport"/>
    <property type="evidence" value="ECO:0007669"/>
    <property type="project" value="Ensembl"/>
</dbReference>
<dbReference type="GO" id="GO:0022008">
    <property type="term" value="P:neurogenesis"/>
    <property type="evidence" value="ECO:0000270"/>
    <property type="project" value="HGNC-UCL"/>
</dbReference>
<dbReference type="GO" id="GO:0030182">
    <property type="term" value="P:neuron differentiation"/>
    <property type="evidence" value="ECO:0000314"/>
    <property type="project" value="HGNC-UCL"/>
</dbReference>
<dbReference type="GO" id="GO:0006644">
    <property type="term" value="P:phospholipid metabolic process"/>
    <property type="evidence" value="ECO:0000314"/>
    <property type="project" value="MGI"/>
</dbReference>
<dbReference type="GO" id="GO:0032805">
    <property type="term" value="P:positive regulation of low-density lipoprotein particle receptor catabolic process"/>
    <property type="evidence" value="ECO:0007669"/>
    <property type="project" value="Ensembl"/>
</dbReference>
<dbReference type="GO" id="GO:0043525">
    <property type="term" value="P:positive regulation of neuron apoptotic process"/>
    <property type="evidence" value="ECO:0000250"/>
    <property type="project" value="HGNC-UCL"/>
</dbReference>
<dbReference type="GO" id="GO:0002092">
    <property type="term" value="P:positive regulation of receptor internalization"/>
    <property type="evidence" value="ECO:0007669"/>
    <property type="project" value="Ensembl"/>
</dbReference>
<dbReference type="GO" id="GO:0016540">
    <property type="term" value="P:protein autoprocessing"/>
    <property type="evidence" value="ECO:0000250"/>
    <property type="project" value="HGNC-UCL"/>
</dbReference>
<dbReference type="GO" id="GO:0032803">
    <property type="term" value="P:regulation of low-density lipoprotein particle receptor catabolic process"/>
    <property type="evidence" value="ECO:0000315"/>
    <property type="project" value="MGI"/>
</dbReference>
<dbReference type="GO" id="GO:0043523">
    <property type="term" value="P:regulation of neuron apoptotic process"/>
    <property type="evidence" value="ECO:0000315"/>
    <property type="project" value="UniProtKB"/>
</dbReference>
<dbReference type="GO" id="GO:0006641">
    <property type="term" value="P:triglyceride metabolic process"/>
    <property type="evidence" value="ECO:0000314"/>
    <property type="project" value="MGI"/>
</dbReference>
<dbReference type="CDD" id="cd04077">
    <property type="entry name" value="Peptidases_S8_PCSK9_ProteinaseK_like"/>
    <property type="match status" value="1"/>
</dbReference>
<dbReference type="FunFam" id="2.60.120.690:FF:000001">
    <property type="entry name" value="Proprotein convertase subtilisin/kexin type 9"/>
    <property type="match status" value="1"/>
</dbReference>
<dbReference type="FunFam" id="3.30.70.80:FF:000004">
    <property type="entry name" value="Proprotein convertase subtilisin/kexin type 9"/>
    <property type="match status" value="1"/>
</dbReference>
<dbReference type="FunFam" id="3.40.50.200:FF:000016">
    <property type="entry name" value="Proprotein convertase subtilisin/kexin type 9"/>
    <property type="match status" value="1"/>
</dbReference>
<dbReference type="Gene3D" id="3.30.70.80">
    <property type="entry name" value="Peptidase S8 propeptide/proteinase inhibitor I9"/>
    <property type="match status" value="1"/>
</dbReference>
<dbReference type="Gene3D" id="3.40.50.200">
    <property type="entry name" value="Peptidase S8/S53 domain"/>
    <property type="match status" value="1"/>
</dbReference>
<dbReference type="Gene3D" id="2.60.120.690">
    <property type="entry name" value="Proprotein convertase subtilisin/kexin type 9"/>
    <property type="match status" value="1"/>
</dbReference>
<dbReference type="InterPro" id="IPR041254">
    <property type="entry name" value="PCSK9_C1"/>
</dbReference>
<dbReference type="InterPro" id="IPR041052">
    <property type="entry name" value="PCSK9_C2"/>
</dbReference>
<dbReference type="InterPro" id="IPR041051">
    <property type="entry name" value="PCSK9_C3"/>
</dbReference>
<dbReference type="InterPro" id="IPR034193">
    <property type="entry name" value="PCSK9_ProteinaseK-like"/>
</dbReference>
<dbReference type="InterPro" id="IPR000209">
    <property type="entry name" value="Peptidase_S8/S53_dom"/>
</dbReference>
<dbReference type="InterPro" id="IPR036852">
    <property type="entry name" value="Peptidase_S8/S53_dom_sf"/>
</dbReference>
<dbReference type="InterPro" id="IPR050131">
    <property type="entry name" value="Peptidase_S8_subtilisin-like"/>
</dbReference>
<dbReference type="InterPro" id="IPR015500">
    <property type="entry name" value="Peptidase_S8_subtilisin-rel"/>
</dbReference>
<dbReference type="InterPro" id="IPR010259">
    <property type="entry name" value="S8pro/Inhibitor_I9"/>
</dbReference>
<dbReference type="InterPro" id="IPR037045">
    <property type="entry name" value="S8pro/Inhibitor_I9_sf"/>
</dbReference>
<dbReference type="PANTHER" id="PTHR43806">
    <property type="entry name" value="PEPTIDASE S8"/>
    <property type="match status" value="1"/>
</dbReference>
<dbReference type="PANTHER" id="PTHR43806:SF60">
    <property type="entry name" value="PROPROTEIN CONVERTASE SUBTILISIN_KEXIN TYPE 9"/>
    <property type="match status" value="1"/>
</dbReference>
<dbReference type="Pfam" id="PF05922">
    <property type="entry name" value="Inhibitor_I9"/>
    <property type="match status" value="1"/>
</dbReference>
<dbReference type="Pfam" id="PF18459">
    <property type="entry name" value="PCSK9_C1"/>
    <property type="match status" value="1"/>
</dbReference>
<dbReference type="Pfam" id="PF18464">
    <property type="entry name" value="PCSK9_C2"/>
    <property type="match status" value="1"/>
</dbReference>
<dbReference type="Pfam" id="PF18463">
    <property type="entry name" value="PCSK9_C3"/>
    <property type="match status" value="1"/>
</dbReference>
<dbReference type="Pfam" id="PF00082">
    <property type="entry name" value="Peptidase_S8"/>
    <property type="match status" value="1"/>
</dbReference>
<dbReference type="PRINTS" id="PR00723">
    <property type="entry name" value="SUBTILISIN"/>
</dbReference>
<dbReference type="SUPFAM" id="SSF54897">
    <property type="entry name" value="Protease propeptides/inhibitors"/>
    <property type="match status" value="1"/>
</dbReference>
<dbReference type="SUPFAM" id="SSF52743">
    <property type="entry name" value="Subtilisin-like"/>
    <property type="match status" value="1"/>
</dbReference>
<dbReference type="PROSITE" id="PS51892">
    <property type="entry name" value="SUBTILASE"/>
    <property type="match status" value="1"/>
</dbReference>
<reference key="1">
    <citation type="patent" date="2001-08-09" number="WO0157081">
        <title>Narc-1, novel subtilase-like homologs.</title>
        <authorList>
            <person name="Chiang L.W."/>
        </authorList>
    </citation>
    <scope>NUCLEOTIDE SEQUENCE</scope>
</reference>
<reference key="2">
    <citation type="journal article" date="2003" name="J. Lipid Res.">
        <title>Novel putative SREBP and LXR target genes identified by microarray analysis in liver of cholesterol-fed mice.</title>
        <authorList>
            <person name="Maxwell K.N."/>
            <person name="Soccio R.E."/>
            <person name="Duncan E.M."/>
            <person name="Sehayek E."/>
            <person name="Breslow J.L."/>
        </authorList>
    </citation>
    <scope>NUCLEOTIDE SEQUENCE [MRNA]</scope>
    <scope>INDUCTION</scope>
    <source>
        <strain>C57BL/6J</strain>
        <tissue>Liver</tissue>
    </source>
</reference>
<reference key="3">
    <citation type="journal article" date="2005" name="Science">
        <title>The transcriptional landscape of the mammalian genome.</title>
        <authorList>
            <person name="Carninci P."/>
            <person name="Kasukawa T."/>
            <person name="Katayama S."/>
            <person name="Gough J."/>
            <person name="Frith M.C."/>
            <person name="Maeda N."/>
            <person name="Oyama R."/>
            <person name="Ravasi T."/>
            <person name="Lenhard B."/>
            <person name="Wells C."/>
            <person name="Kodzius R."/>
            <person name="Shimokawa K."/>
            <person name="Bajic V.B."/>
            <person name="Brenner S.E."/>
            <person name="Batalov S."/>
            <person name="Forrest A.R."/>
            <person name="Zavolan M."/>
            <person name="Davis M.J."/>
            <person name="Wilming L.G."/>
            <person name="Aidinis V."/>
            <person name="Allen J.E."/>
            <person name="Ambesi-Impiombato A."/>
            <person name="Apweiler R."/>
            <person name="Aturaliya R.N."/>
            <person name="Bailey T.L."/>
            <person name="Bansal M."/>
            <person name="Baxter L."/>
            <person name="Beisel K.W."/>
            <person name="Bersano T."/>
            <person name="Bono H."/>
            <person name="Chalk A.M."/>
            <person name="Chiu K.P."/>
            <person name="Choudhary V."/>
            <person name="Christoffels A."/>
            <person name="Clutterbuck D.R."/>
            <person name="Crowe M.L."/>
            <person name="Dalla E."/>
            <person name="Dalrymple B.P."/>
            <person name="de Bono B."/>
            <person name="Della Gatta G."/>
            <person name="di Bernardo D."/>
            <person name="Down T."/>
            <person name="Engstrom P."/>
            <person name="Fagiolini M."/>
            <person name="Faulkner G."/>
            <person name="Fletcher C.F."/>
            <person name="Fukushima T."/>
            <person name="Furuno M."/>
            <person name="Futaki S."/>
            <person name="Gariboldi M."/>
            <person name="Georgii-Hemming P."/>
            <person name="Gingeras T.R."/>
            <person name="Gojobori T."/>
            <person name="Green R.E."/>
            <person name="Gustincich S."/>
            <person name="Harbers M."/>
            <person name="Hayashi Y."/>
            <person name="Hensch T.K."/>
            <person name="Hirokawa N."/>
            <person name="Hill D."/>
            <person name="Huminiecki L."/>
            <person name="Iacono M."/>
            <person name="Ikeo K."/>
            <person name="Iwama A."/>
            <person name="Ishikawa T."/>
            <person name="Jakt M."/>
            <person name="Kanapin A."/>
            <person name="Katoh M."/>
            <person name="Kawasawa Y."/>
            <person name="Kelso J."/>
            <person name="Kitamura H."/>
            <person name="Kitano H."/>
            <person name="Kollias G."/>
            <person name="Krishnan S.P."/>
            <person name="Kruger A."/>
            <person name="Kummerfeld S.K."/>
            <person name="Kurochkin I.V."/>
            <person name="Lareau L.F."/>
            <person name="Lazarevic D."/>
            <person name="Lipovich L."/>
            <person name="Liu J."/>
            <person name="Liuni S."/>
            <person name="McWilliam S."/>
            <person name="Madan Babu M."/>
            <person name="Madera M."/>
            <person name="Marchionni L."/>
            <person name="Matsuda H."/>
            <person name="Matsuzawa S."/>
            <person name="Miki H."/>
            <person name="Mignone F."/>
            <person name="Miyake S."/>
            <person name="Morris K."/>
            <person name="Mottagui-Tabar S."/>
            <person name="Mulder N."/>
            <person name="Nakano N."/>
            <person name="Nakauchi H."/>
            <person name="Ng P."/>
            <person name="Nilsson R."/>
            <person name="Nishiguchi S."/>
            <person name="Nishikawa S."/>
            <person name="Nori F."/>
            <person name="Ohara O."/>
            <person name="Okazaki Y."/>
            <person name="Orlando V."/>
            <person name="Pang K.C."/>
            <person name="Pavan W.J."/>
            <person name="Pavesi G."/>
            <person name="Pesole G."/>
            <person name="Petrovsky N."/>
            <person name="Piazza S."/>
            <person name="Reed J."/>
            <person name="Reid J.F."/>
            <person name="Ring B.Z."/>
            <person name="Ringwald M."/>
            <person name="Rost B."/>
            <person name="Ruan Y."/>
            <person name="Salzberg S.L."/>
            <person name="Sandelin A."/>
            <person name="Schneider C."/>
            <person name="Schoenbach C."/>
            <person name="Sekiguchi K."/>
            <person name="Semple C.A."/>
            <person name="Seno S."/>
            <person name="Sessa L."/>
            <person name="Sheng Y."/>
            <person name="Shibata Y."/>
            <person name="Shimada H."/>
            <person name="Shimada K."/>
            <person name="Silva D."/>
            <person name="Sinclair B."/>
            <person name="Sperling S."/>
            <person name="Stupka E."/>
            <person name="Sugiura K."/>
            <person name="Sultana R."/>
            <person name="Takenaka Y."/>
            <person name="Taki K."/>
            <person name="Tammoja K."/>
            <person name="Tan S.L."/>
            <person name="Tang S."/>
            <person name="Taylor M.S."/>
            <person name="Tegner J."/>
            <person name="Teichmann S.A."/>
            <person name="Ueda H.R."/>
            <person name="van Nimwegen E."/>
            <person name="Verardo R."/>
            <person name="Wei C.L."/>
            <person name="Yagi K."/>
            <person name="Yamanishi H."/>
            <person name="Zabarovsky E."/>
            <person name="Zhu S."/>
            <person name="Zimmer A."/>
            <person name="Hide W."/>
            <person name="Bult C."/>
            <person name="Grimmond S.M."/>
            <person name="Teasdale R.D."/>
            <person name="Liu E.T."/>
            <person name="Brusic V."/>
            <person name="Quackenbush J."/>
            <person name="Wahlestedt C."/>
            <person name="Mattick J.S."/>
            <person name="Hume D.A."/>
            <person name="Kai C."/>
            <person name="Sasaki D."/>
            <person name="Tomaru Y."/>
            <person name="Fukuda S."/>
            <person name="Kanamori-Katayama M."/>
            <person name="Suzuki M."/>
            <person name="Aoki J."/>
            <person name="Arakawa T."/>
            <person name="Iida J."/>
            <person name="Imamura K."/>
            <person name="Itoh M."/>
            <person name="Kato T."/>
            <person name="Kawaji H."/>
            <person name="Kawagashira N."/>
            <person name="Kawashima T."/>
            <person name="Kojima M."/>
            <person name="Kondo S."/>
            <person name="Konno H."/>
            <person name="Nakano K."/>
            <person name="Ninomiya N."/>
            <person name="Nishio T."/>
            <person name="Okada M."/>
            <person name="Plessy C."/>
            <person name="Shibata K."/>
            <person name="Shiraki T."/>
            <person name="Suzuki S."/>
            <person name="Tagami M."/>
            <person name="Waki K."/>
            <person name="Watahiki A."/>
            <person name="Okamura-Oho Y."/>
            <person name="Suzuki H."/>
            <person name="Kawai J."/>
            <person name="Hayashizaki Y."/>
        </authorList>
    </citation>
    <scope>NUCLEOTIDE SEQUENCE [LARGE SCALE MRNA]</scope>
    <source>
        <strain>C57BL/6J</strain>
        <tissue>Liver</tissue>
    </source>
</reference>
<reference key="4">
    <citation type="journal article" date="2009" name="PLoS Biol.">
        <title>Lineage-specific biology revealed by a finished genome assembly of the mouse.</title>
        <authorList>
            <person name="Church D.M."/>
            <person name="Goodstadt L."/>
            <person name="Hillier L.W."/>
            <person name="Zody M.C."/>
            <person name="Goldstein S."/>
            <person name="She X."/>
            <person name="Bult C.J."/>
            <person name="Agarwala R."/>
            <person name="Cherry J.L."/>
            <person name="DiCuccio M."/>
            <person name="Hlavina W."/>
            <person name="Kapustin Y."/>
            <person name="Meric P."/>
            <person name="Maglott D."/>
            <person name="Birtle Z."/>
            <person name="Marques A.C."/>
            <person name="Graves T."/>
            <person name="Zhou S."/>
            <person name="Teague B."/>
            <person name="Potamousis K."/>
            <person name="Churas C."/>
            <person name="Place M."/>
            <person name="Herschleb J."/>
            <person name="Runnheim R."/>
            <person name="Forrest D."/>
            <person name="Amos-Landgraf J."/>
            <person name="Schwartz D.C."/>
            <person name="Cheng Z."/>
            <person name="Lindblad-Toh K."/>
            <person name="Eichler E.E."/>
            <person name="Ponting C.P."/>
        </authorList>
    </citation>
    <scope>NUCLEOTIDE SEQUENCE [LARGE SCALE GENOMIC DNA]</scope>
    <source>
        <strain>C57BL/6J</strain>
    </source>
</reference>
<reference key="5">
    <citation type="journal article" date="2004" name="Genome Res.">
        <title>The status, quality, and expansion of the NIH full-length cDNA project: the Mammalian Gene Collection (MGC).</title>
        <authorList>
            <consortium name="The MGC Project Team"/>
        </authorList>
    </citation>
    <scope>NUCLEOTIDE SEQUENCE [LARGE SCALE MRNA]</scope>
    <source>
        <strain>C57BL/6J</strain>
        <tissue>Eye</tissue>
    </source>
</reference>
<reference key="6">
    <citation type="journal article" date="2003" name="Proc. Natl. Acad. Sci. U.S.A.">
        <title>The secretory proprotein convertase neural apoptosis-regulated convertase 1 (NARC-1): liver regeneration and neuronal differentiation.</title>
        <authorList>
            <person name="Seidah N.G."/>
            <person name="Benjannet S."/>
            <person name="Wickham L."/>
            <person name="Marcinkiewicz J."/>
            <person name="Jasmin S.B."/>
            <person name="Stifani S."/>
            <person name="Basak A."/>
            <person name="Prat A."/>
            <person name="Chretien M."/>
        </authorList>
    </citation>
    <scope>IDENTIFICATION OF PROPEPTIDE CLEAVAGE SITE</scope>
    <scope>CHARACTERIZATION</scope>
</reference>
<reference key="7">
    <citation type="journal article" date="2003" name="Arch. Biochem. Biophys.">
        <title>Functional characterization of Narc 1, a novel proteinase related to proteinase K.</title>
        <authorList>
            <person name="Naureckiene S."/>
            <person name="Ma L."/>
            <person name="Sreekumar K."/>
            <person name="Purandare U."/>
            <person name="Lo C.F."/>
            <person name="Huang Y."/>
            <person name="Chiang L.W."/>
            <person name="Grenier J.M."/>
            <person name="Ozenberger B.A."/>
            <person name="Jacobsen J.S."/>
            <person name="Kennedy J.D."/>
            <person name="DiStefano P.S."/>
            <person name="Wood A."/>
            <person name="Bingham B."/>
        </authorList>
    </citation>
    <scope>AUTOCATALYTIC CLEAVAGE SITE</scope>
</reference>
<reference key="8">
    <citation type="journal article" date="2008" name="FEBS J.">
        <title>PCSK9 is phosphorylated by a Golgi casein kinase-like kinase ex vivo and circulates as a phosphoprotein in humans.</title>
        <authorList>
            <person name="Dewpura T."/>
            <person name="Raymond A."/>
            <person name="Hamelin J."/>
            <person name="Seidah N.G."/>
            <person name="Mbikay M."/>
            <person name="Chretien M."/>
            <person name="Mayne J."/>
        </authorList>
    </citation>
    <scope>PHOSPHORYLATION AT SER-50</scope>
    <scope>IDENTIFICATION BY MASS SPECTROMETRY</scope>
</reference>
<reference key="9">
    <citation type="journal article" date="2012" name="Arterioscler. Thromb. Vasc. Biol.">
        <title>Proprotein convertase subtilisin/kexin type 9 interacts with apolipoprotein B and prevents its intracellular degradation, irrespective of the low-density lipoprotein receptor.</title>
        <authorList>
            <person name="Sun H."/>
            <person name="Samarghandi A."/>
            <person name="Zhang N."/>
            <person name="Yao Z."/>
            <person name="Xiong M."/>
            <person name="Teng B.B."/>
        </authorList>
    </citation>
    <scope>FUNCTION</scope>
</reference>
<reference key="10">
    <citation type="journal article" date="2012" name="Cell. Mol. Life Sci.">
        <title>PCSK9 regulates neuronal apoptosis by adjusting ApoER2 levels and signaling.</title>
        <authorList>
            <person name="Kysenius K."/>
            <person name="Muggalla P."/>
            <person name="Maetlik K."/>
            <person name="Arumaee U."/>
            <person name="Huttunen H.J."/>
        </authorList>
    </citation>
    <scope>FUNCTION</scope>
</reference>
<feature type="signal peptide" evidence="3">
    <location>
        <begin position="1"/>
        <end position="34"/>
    </location>
</feature>
<feature type="propeptide" id="PRO_0000027122">
    <location>
        <begin position="35"/>
        <end position="155"/>
    </location>
</feature>
<feature type="chain" id="PRO_0000027123" description="Proprotein convertase subtilisin/kexin type 9">
    <location>
        <begin position="156"/>
        <end position="694"/>
    </location>
</feature>
<feature type="domain" description="Peptidase S8" evidence="4">
    <location>
        <begin position="158"/>
        <end position="470"/>
    </location>
</feature>
<feature type="region of interest" description="C-terminal domain" evidence="1">
    <location>
        <begin position="453"/>
        <end position="694"/>
    </location>
</feature>
<feature type="short sequence motif" description="Cell attachment site" evidence="3">
    <location>
        <begin position="499"/>
        <end position="501"/>
    </location>
</feature>
<feature type="active site" description="Charge relay system" evidence="4">
    <location>
        <position position="189"/>
    </location>
</feature>
<feature type="active site" description="Charge relay system" evidence="4">
    <location>
        <position position="229"/>
    </location>
</feature>
<feature type="active site" description="Charge relay system" evidence="4">
    <location>
        <position position="389"/>
    </location>
</feature>
<feature type="site" description="Cleavage; by autolysis" evidence="1">
    <location>
        <begin position="155"/>
        <end position="156"/>
    </location>
</feature>
<feature type="site" description="Cleavage; by furin and PCSK5" evidence="1">
    <location>
        <begin position="221"/>
        <end position="222"/>
    </location>
</feature>
<feature type="modified residue" description="Sulfotyrosine" evidence="1">
    <location>
        <position position="41"/>
    </location>
</feature>
<feature type="modified residue" description="Phosphoserine" evidence="6">
    <location>
        <position position="50"/>
    </location>
</feature>
<feature type="modified residue" description="Phosphoserine" evidence="2">
    <location>
        <position position="691"/>
    </location>
</feature>
<feature type="glycosylation site" description="N-linked (GlcNAc...) asparagine" evidence="1">
    <location>
        <position position="536"/>
    </location>
</feature>
<feature type="disulfide bond" evidence="3">
    <location>
        <begin position="226"/>
        <end position="258"/>
    </location>
</feature>
<feature type="disulfide bond" evidence="3">
    <location>
        <begin position="326"/>
        <end position="361"/>
    </location>
</feature>
<feature type="disulfide bond" evidence="3">
    <location>
        <begin position="460"/>
        <end position="530"/>
    </location>
</feature>
<feature type="disulfide bond" evidence="3">
    <location>
        <begin position="480"/>
        <end position="529"/>
    </location>
</feature>
<feature type="disulfide bond" evidence="3">
    <location>
        <begin position="489"/>
        <end position="512"/>
    </location>
</feature>
<feature type="disulfide bond" evidence="3">
    <location>
        <begin position="537"/>
        <end position="604"/>
    </location>
</feature>
<feature type="disulfide bond" evidence="3">
    <location>
        <begin position="555"/>
        <end position="603"/>
    </location>
</feature>
<feature type="disulfide bond" evidence="3">
    <location>
        <begin position="565"/>
        <end position="591"/>
    </location>
</feature>
<feature type="disulfide bond" evidence="3">
    <location>
        <begin position="611"/>
        <end position="682"/>
    </location>
</feature>
<feature type="disulfide bond" evidence="3">
    <location>
        <begin position="629"/>
        <end position="681"/>
    </location>
</feature>
<feature type="disulfide bond" evidence="3">
    <location>
        <begin position="638"/>
        <end position="657"/>
    </location>
</feature>
<feature type="sequence conflict" description="In Ref. 1; CAC60362." evidence="9" ref="1">
    <location>
        <begin position="17"/>
        <end position="19"/>
    </location>
</feature>
<feature type="sequence conflict" description="In Ref. 1; CAC60362." evidence="9" ref="1">
    <original>A</original>
    <variation>T</variation>
    <location>
        <position position="34"/>
    </location>
</feature>
<feature type="sequence conflict" description="In Ref. 1; CAC60362." evidence="9" ref="1">
    <original>D</original>
    <variation>G</variation>
    <location>
        <position position="189"/>
    </location>
</feature>
<feature type="sequence conflict" description="In Ref. 1; CAC60362." evidence="9" ref="1">
    <original>H</original>
    <variation>Y</variation>
    <location>
        <position position="196"/>
    </location>
</feature>
<feature type="sequence conflict" description="In Ref. 1; CAC60362." evidence="9" ref="1">
    <original>E</original>
    <variation>A</variation>
    <location>
        <position position="200"/>
    </location>
</feature>
<feature type="sequence conflict" description="In Ref. 1; CAC60362." evidence="9" ref="1">
    <original>R</original>
    <variation>Q</variation>
    <location>
        <position position="305"/>
    </location>
</feature>
<feature type="sequence conflict" description="In Ref. 1; CAC60362." evidence="9" ref="1">
    <original>R</original>
    <variation>H</variation>
    <location>
        <position position="534"/>
    </location>
</feature>
<feature type="sequence conflict" description="In Ref. 1; CAC60362." evidence="9" ref="1">
    <original>T</original>
    <variation>A</variation>
    <location>
        <position position="626"/>
    </location>
</feature>
<protein>
    <recommendedName>
        <fullName>Proprotein convertase subtilisin/kexin type 9</fullName>
        <ecNumber>3.4.21.-</ecNumber>
    </recommendedName>
    <alternativeName>
        <fullName>Neural apoptosis-regulated convertase 1</fullName>
        <shortName>NARC-1</shortName>
    </alternativeName>
    <alternativeName>
        <fullName>Proprotein convertase 9</fullName>
        <shortName>PC9</shortName>
    </alternativeName>
    <alternativeName>
        <fullName>Subtilisin/kexin-like protease PC9</fullName>
    </alternativeName>
</protein>
<name>PCSK9_MOUSE</name>